<accession>Q07DV5</accession>
<reference key="1">
    <citation type="submission" date="2006-09" db="EMBL/GenBank/DDBJ databases">
        <title>NISC comparative sequencing initiative.</title>
        <authorList>
            <person name="Antonellis A."/>
            <person name="Ayele K."/>
            <person name="Benjamin B."/>
            <person name="Blakesley R.W."/>
            <person name="Boakye A."/>
            <person name="Bouffard G.G."/>
            <person name="Brinkley C."/>
            <person name="Brooks S."/>
            <person name="Chu G."/>
            <person name="Coleman H."/>
            <person name="Engle J."/>
            <person name="Gestole M."/>
            <person name="Greene A."/>
            <person name="Guan X."/>
            <person name="Gupta J."/>
            <person name="Haghighi P."/>
            <person name="Han J."/>
            <person name="Hansen N."/>
            <person name="Ho S.-L."/>
            <person name="Hu P."/>
            <person name="Hunter G."/>
            <person name="Hurle B."/>
            <person name="Idol J.R."/>
            <person name="Kwong P."/>
            <person name="Laric P."/>
            <person name="Larson S."/>
            <person name="Lee-Lin S.-Q."/>
            <person name="Legaspi R."/>
            <person name="Madden M."/>
            <person name="Maduro Q.L."/>
            <person name="Maduro V.B."/>
            <person name="Margulies E.H."/>
            <person name="Masiello C."/>
            <person name="Maskeri B."/>
            <person name="McDowell J."/>
            <person name="Mojidi H.A."/>
            <person name="Mullikin J.C."/>
            <person name="Oestreicher J.S."/>
            <person name="Park M."/>
            <person name="Portnoy M.E."/>
            <person name="Prasad A."/>
            <person name="Puri O."/>
            <person name="Reddix-Dugue N."/>
            <person name="Schandler K."/>
            <person name="Schueler M.G."/>
            <person name="Sison C."/>
            <person name="Stantripop S."/>
            <person name="Stephen E."/>
            <person name="Taye A."/>
            <person name="Thomas J.W."/>
            <person name="Thomas P.J."/>
            <person name="Tsipouri V."/>
            <person name="Ung L."/>
            <person name="Vogt J.L."/>
            <person name="Wetherby K.D."/>
            <person name="Young A."/>
            <person name="Green E.D."/>
        </authorList>
    </citation>
    <scope>NUCLEOTIDE SEQUENCE [LARGE SCALE GENOMIC DNA]</scope>
</reference>
<comment type="subcellular location">
    <subcellularLocation>
        <location evidence="3">Membrane</location>
        <topology evidence="3">Multi-pass membrane protein</topology>
    </subcellularLocation>
</comment>
<comment type="similarity">
    <text evidence="3">Belongs to the ST7 family.</text>
</comment>
<evidence type="ECO:0000250" key="1">
    <source>
        <dbReference type="UniProtKB" id="Q9NRC1"/>
    </source>
</evidence>
<evidence type="ECO:0000255" key="2"/>
<evidence type="ECO:0000305" key="3"/>
<organism>
    <name type="scientific">Aotus nancymaae</name>
    <name type="common">Ma's night monkey</name>
    <dbReference type="NCBI Taxonomy" id="37293"/>
    <lineage>
        <taxon>Eukaryota</taxon>
        <taxon>Metazoa</taxon>
        <taxon>Chordata</taxon>
        <taxon>Craniata</taxon>
        <taxon>Vertebrata</taxon>
        <taxon>Euteleostomi</taxon>
        <taxon>Mammalia</taxon>
        <taxon>Eutheria</taxon>
        <taxon>Euarchontoglires</taxon>
        <taxon>Primates</taxon>
        <taxon>Haplorrhini</taxon>
        <taxon>Platyrrhini</taxon>
        <taxon>Aotidae</taxon>
        <taxon>Aotus</taxon>
    </lineage>
</organism>
<dbReference type="EMBL" id="DP000197">
    <property type="protein sequence ID" value="ABJ08887.1"/>
    <property type="molecule type" value="Genomic_DNA"/>
</dbReference>
<dbReference type="RefSeq" id="XP_012312395.1">
    <property type="nucleotide sequence ID" value="XM_012456972.1"/>
</dbReference>
<dbReference type="GlyCosmos" id="Q07DV5">
    <property type="glycosylation" value="1 site, No reported glycans"/>
</dbReference>
<dbReference type="GeneID" id="105720428"/>
<dbReference type="KEGG" id="anan:105720428"/>
<dbReference type="CTD" id="7982"/>
<dbReference type="OrthoDB" id="5914722at2759"/>
<dbReference type="Proteomes" id="UP000233020">
    <property type="component" value="Whole Genome Shotgun Assembly"/>
</dbReference>
<dbReference type="GO" id="GO:0016020">
    <property type="term" value="C:membrane"/>
    <property type="evidence" value="ECO:0007669"/>
    <property type="project" value="UniProtKB-SubCell"/>
</dbReference>
<dbReference type="CDD" id="cd11557">
    <property type="entry name" value="ST7"/>
    <property type="match status" value="1"/>
</dbReference>
<dbReference type="InterPro" id="IPR007311">
    <property type="entry name" value="ST7"/>
</dbReference>
<dbReference type="PANTHER" id="PTHR12745">
    <property type="entry name" value="SUPPRESSION OF TUMORIGENICITY 7"/>
    <property type="match status" value="1"/>
</dbReference>
<dbReference type="PANTHER" id="PTHR12745:SF10">
    <property type="entry name" value="SUPPRESSOR OF TUMORIGENICITY 7 PROTEIN"/>
    <property type="match status" value="1"/>
</dbReference>
<dbReference type="Pfam" id="PF04184">
    <property type="entry name" value="ST7"/>
    <property type="match status" value="1"/>
</dbReference>
<protein>
    <recommendedName>
        <fullName>Suppressor of tumorigenicity 7 protein</fullName>
    </recommendedName>
</protein>
<proteinExistence type="inferred from homology"/>
<feature type="chain" id="PRO_0000339190" description="Suppressor of tumorigenicity 7 protein">
    <location>
        <begin position="1"/>
        <end position="585"/>
    </location>
</feature>
<feature type="transmembrane region" description="Helical" evidence="2">
    <location>
        <begin position="15"/>
        <end position="35"/>
    </location>
</feature>
<feature type="transmembrane region" description="Helical" evidence="2">
    <location>
        <begin position="62"/>
        <end position="82"/>
    </location>
</feature>
<feature type="transmembrane region" description="Helical" evidence="2">
    <location>
        <begin position="512"/>
        <end position="532"/>
    </location>
</feature>
<feature type="modified residue" description="Phosphoserine" evidence="1">
    <location>
        <position position="386"/>
    </location>
</feature>
<feature type="glycosylation site" description="N-linked (GlcNAc...) asparagine" evidence="2">
    <location>
        <position position="47"/>
    </location>
</feature>
<name>ST7_AOTNA</name>
<sequence length="585" mass="67152">MAEAGTGFLEQLKSCIVWSWTYLWTVWFFIVLFLVYILRVPLKINDNLSTVSMFLNTLTPKFYVALTGTSSLISGLILIFEWWYFRKYGTSFIEQVSVSHLRPLLGGVDNNSSNNSNSSNGDSDSNRQSVSECKVWRNPLNLFRGAEYNRYTWVTGREPLTYYDMNLSAQDHQTFFTCDSDHLRPADAIMQKAWRERNPQARISAAHEALEINEIRSRVEVPLIASSTIWEIKLLPKCATAYILLAEEEATTIAEAEKLFKQALKAGDGCYRRSQQLQHHGSQYEAQHRRDTNVLVYIKRRLAMCARRLGRTREAVKMMRDLMKEFPLLSMFNIHENLLEALLELQAYADVQAVLAKYDDISLPKSATICYTAALLKARAVSDKFSPEAASRRGLSTAEMNAVEAIHRAVEFNPHVPKYLLEMKSLILPPEHILKRGDSEAIAYAFFHLAHWKRVEGALNLLHCTWEGTFRMIPYPLEKGHLFYPYPICTETADRELLPSFHEVSVYPKKELPFFILFTAGLCSFTAMLALLTHQFPELMGVFAKAMIDIFCSAEFRDWNCKSIFMRVEDELEIPPAPQSQHFQN</sequence>
<gene>
    <name type="primary">ST7</name>
</gene>
<keyword id="KW-0325">Glycoprotein</keyword>
<keyword id="KW-0472">Membrane</keyword>
<keyword id="KW-0597">Phosphoprotein</keyword>
<keyword id="KW-1185">Reference proteome</keyword>
<keyword id="KW-0812">Transmembrane</keyword>
<keyword id="KW-1133">Transmembrane helix</keyword>